<proteinExistence type="inferred from homology"/>
<dbReference type="EC" id="3.5.1.44" evidence="1"/>
<dbReference type="EMBL" id="CP000867">
    <property type="protein sequence ID" value="ABX02539.1"/>
    <property type="molecule type" value="Genomic_DNA"/>
</dbReference>
<dbReference type="SMR" id="A9AB16"/>
<dbReference type="STRING" id="444158.MmarC6_1727"/>
<dbReference type="KEGG" id="mmx:MmarC6_1727"/>
<dbReference type="eggNOG" id="arCOG02380">
    <property type="taxonomic scope" value="Archaea"/>
</dbReference>
<dbReference type="HOGENOM" id="CLU_087854_2_0_2"/>
<dbReference type="OrthoDB" id="10499at2157"/>
<dbReference type="PhylomeDB" id="A9AB16"/>
<dbReference type="GO" id="GO:0050568">
    <property type="term" value="F:protein-glutamine glutaminase activity"/>
    <property type="evidence" value="ECO:0007669"/>
    <property type="project" value="UniProtKB-UniRule"/>
</dbReference>
<dbReference type="GO" id="GO:0006935">
    <property type="term" value="P:chemotaxis"/>
    <property type="evidence" value="ECO:0007669"/>
    <property type="project" value="UniProtKB-UniRule"/>
</dbReference>
<dbReference type="CDD" id="cd16352">
    <property type="entry name" value="CheD"/>
    <property type="match status" value="1"/>
</dbReference>
<dbReference type="Gene3D" id="3.30.1330.200">
    <property type="match status" value="1"/>
</dbReference>
<dbReference type="HAMAP" id="MF_01440">
    <property type="entry name" value="CheD"/>
    <property type="match status" value="1"/>
</dbReference>
<dbReference type="InterPro" id="IPR038592">
    <property type="entry name" value="CheD-like_sf"/>
</dbReference>
<dbReference type="InterPro" id="IPR005659">
    <property type="entry name" value="Chemorcpt_Glu_NH3ase_CheD"/>
</dbReference>
<dbReference type="InterPro" id="IPR011324">
    <property type="entry name" value="Cytotoxic_necrot_fac-like_cat"/>
</dbReference>
<dbReference type="PANTHER" id="PTHR35147">
    <property type="entry name" value="CHEMORECEPTOR GLUTAMINE DEAMIDASE CHED-RELATED"/>
    <property type="match status" value="1"/>
</dbReference>
<dbReference type="PANTHER" id="PTHR35147:SF1">
    <property type="entry name" value="CHEMORECEPTOR GLUTAMINE DEAMIDASE CHED-RELATED"/>
    <property type="match status" value="1"/>
</dbReference>
<dbReference type="Pfam" id="PF03975">
    <property type="entry name" value="CheD"/>
    <property type="match status" value="1"/>
</dbReference>
<dbReference type="SUPFAM" id="SSF64438">
    <property type="entry name" value="CNF1/YfiH-like putative cysteine hydrolases"/>
    <property type="match status" value="1"/>
</dbReference>
<sequence length="154" mass="16334">MVLKVKMGDIGVAKSPESIETLLGSCVAIILYDRGKKVGGVAHVMLPKSRNAAEKNPGKYADTALPELLDRMTKLGARKDKLTAKLAGGAAMFKCNSNTIDVGKKNIEASKEEVRKVGLRIASEDLGGDIGRTITLSLKDGSVIVRKGAELKTI</sequence>
<gene>
    <name evidence="1" type="primary">cheD</name>
    <name type="ordered locus">MmarC6_1727</name>
</gene>
<comment type="function">
    <text evidence="1">Probably deamidates glutamine residues to glutamate on methyl-accepting chemotaxis receptors (MCPs), playing an important role in chemotaxis.</text>
</comment>
<comment type="catalytic activity">
    <reaction evidence="1">
        <text>L-glutaminyl-[protein] + H2O = L-glutamyl-[protein] + NH4(+)</text>
        <dbReference type="Rhea" id="RHEA:16441"/>
        <dbReference type="Rhea" id="RHEA-COMP:10207"/>
        <dbReference type="Rhea" id="RHEA-COMP:10208"/>
        <dbReference type="ChEBI" id="CHEBI:15377"/>
        <dbReference type="ChEBI" id="CHEBI:28938"/>
        <dbReference type="ChEBI" id="CHEBI:29973"/>
        <dbReference type="ChEBI" id="CHEBI:30011"/>
        <dbReference type="EC" id="3.5.1.44"/>
    </reaction>
</comment>
<comment type="similarity">
    <text evidence="1">Belongs to the CheD family.</text>
</comment>
<name>CHED_METM6</name>
<reference key="1">
    <citation type="submission" date="2007-10" db="EMBL/GenBank/DDBJ databases">
        <title>Complete sequence of Methanococcus maripaludis C6.</title>
        <authorList>
            <consortium name="US DOE Joint Genome Institute"/>
            <person name="Copeland A."/>
            <person name="Lucas S."/>
            <person name="Lapidus A."/>
            <person name="Barry K."/>
            <person name="Glavina del Rio T."/>
            <person name="Dalin E."/>
            <person name="Tice H."/>
            <person name="Pitluck S."/>
            <person name="Clum A."/>
            <person name="Schmutz J."/>
            <person name="Larimer F."/>
            <person name="Land M."/>
            <person name="Hauser L."/>
            <person name="Kyrpides N."/>
            <person name="Mikhailova N."/>
            <person name="Sieprawska-Lupa M."/>
            <person name="Whitman W.B."/>
            <person name="Richardson P."/>
        </authorList>
    </citation>
    <scope>NUCLEOTIDE SEQUENCE [LARGE SCALE GENOMIC DNA]</scope>
    <source>
        <strain>C6 / ATCC BAA-1332</strain>
    </source>
</reference>
<protein>
    <recommendedName>
        <fullName evidence="1">Probable chemoreceptor glutamine deamidase CheD</fullName>
        <ecNumber evidence="1">3.5.1.44</ecNumber>
    </recommendedName>
</protein>
<feature type="chain" id="PRO_1000145891" description="Probable chemoreceptor glutamine deamidase CheD">
    <location>
        <begin position="1"/>
        <end position="154"/>
    </location>
</feature>
<accession>A9AB16</accession>
<organism>
    <name type="scientific">Methanococcus maripaludis (strain C6 / ATCC BAA-1332)</name>
    <dbReference type="NCBI Taxonomy" id="444158"/>
    <lineage>
        <taxon>Archaea</taxon>
        <taxon>Methanobacteriati</taxon>
        <taxon>Methanobacteriota</taxon>
        <taxon>Methanomada group</taxon>
        <taxon>Methanococci</taxon>
        <taxon>Methanococcales</taxon>
        <taxon>Methanococcaceae</taxon>
        <taxon>Methanococcus</taxon>
    </lineage>
</organism>
<keyword id="KW-0145">Chemotaxis</keyword>
<keyword id="KW-0378">Hydrolase</keyword>
<evidence type="ECO:0000255" key="1">
    <source>
        <dbReference type="HAMAP-Rule" id="MF_01440"/>
    </source>
</evidence>